<feature type="chain" id="PRO_0000054275" description="Large neutral amino acids transporter small subunit 2">
    <location>
        <begin position="1"/>
        <end position="533"/>
    </location>
</feature>
<feature type="topological domain" description="Cytoplasmic" evidence="8">
    <location>
        <begin position="1"/>
        <end position="45"/>
    </location>
</feature>
<feature type="transmembrane region" description="Helical; Name=1" evidence="2">
    <location>
        <begin position="46"/>
        <end position="66"/>
    </location>
</feature>
<feature type="topological domain" description="Extracellular" evidence="8">
    <location>
        <begin position="67"/>
        <end position="74"/>
    </location>
</feature>
<feature type="transmembrane region" description="Helical; Name=2" evidence="2">
    <location>
        <begin position="75"/>
        <end position="96"/>
    </location>
</feature>
<feature type="topological domain" description="Cytoplasmic" evidence="8">
    <location>
        <begin position="97"/>
        <end position="117"/>
    </location>
</feature>
<feature type="transmembrane region" description="Helical; Name=3" evidence="2">
    <location>
        <begin position="118"/>
        <end position="150"/>
    </location>
</feature>
<feature type="topological domain" description="Extracellular" evidence="8">
    <location>
        <begin position="151"/>
        <end position="158"/>
    </location>
</feature>
<feature type="transmembrane region" description="Helical; Name=4" evidence="2">
    <location>
        <begin position="159"/>
        <end position="179"/>
    </location>
</feature>
<feature type="topological domain" description="Cytoplasmic" evidence="8">
    <location>
        <begin position="180"/>
        <end position="182"/>
    </location>
</feature>
<feature type="transmembrane region" description="Helical; Name=5" evidence="2">
    <location>
        <begin position="183"/>
        <end position="211"/>
    </location>
</feature>
<feature type="topological domain" description="Extracellular" evidence="8">
    <location>
        <begin position="212"/>
        <end position="231"/>
    </location>
</feature>
<feature type="transmembrane region" description="Helical; Name=6" evidence="2">
    <location>
        <begin position="232"/>
        <end position="253"/>
    </location>
</feature>
<feature type="topological domain" description="Cytoplasmic" evidence="8">
    <location>
        <begin position="254"/>
        <end position="266"/>
    </location>
</feature>
<feature type="transmembrane region" description="Helical; Name=7" evidence="2">
    <location>
        <begin position="267"/>
        <end position="288"/>
    </location>
</feature>
<feature type="topological domain" description="Extracellular" evidence="8">
    <location>
        <begin position="289"/>
        <end position="313"/>
    </location>
</feature>
<feature type="transmembrane region" description="Helical; Name=8" evidence="2">
    <location>
        <begin position="314"/>
        <end position="339"/>
    </location>
</feature>
<feature type="topological domain" description="Cytoplasmic" evidence="8">
    <location>
        <begin position="340"/>
        <end position="365"/>
    </location>
</feature>
<feature type="transmembrane region" description="Helical; Name=9" evidence="2">
    <location>
        <begin position="366"/>
        <end position="383"/>
    </location>
</feature>
<feature type="topological domain" description="Extracellular" evidence="8">
    <location>
        <begin position="384"/>
        <end position="387"/>
    </location>
</feature>
<feature type="transmembrane region" description="Helical; Name=10" evidence="2">
    <location>
        <begin position="388"/>
        <end position="409"/>
    </location>
</feature>
<feature type="topological domain" description="Cytoplasmic" evidence="8">
    <location>
        <begin position="410"/>
        <end position="424"/>
    </location>
</feature>
<feature type="transmembrane region" description="Helical; Name=11" evidence="2">
    <location>
        <begin position="425"/>
        <end position="447"/>
    </location>
</feature>
<feature type="transmembrane region" description="Helical; Name=12" evidence="2">
    <location>
        <begin position="448"/>
        <end position="467"/>
    </location>
</feature>
<feature type="topological domain" description="Cytoplasmic" evidence="8">
    <location>
        <begin position="468"/>
        <end position="533"/>
    </location>
</feature>
<feature type="region of interest" description="Disordered" evidence="3">
    <location>
        <begin position="1"/>
        <end position="33"/>
    </location>
</feature>
<feature type="region of interest" description="Disordered" evidence="3">
    <location>
        <begin position="500"/>
        <end position="533"/>
    </location>
</feature>
<feature type="compositionally biased region" description="Acidic residues" evidence="3">
    <location>
        <begin position="502"/>
        <end position="512"/>
    </location>
</feature>
<feature type="binding site" evidence="2">
    <location>
        <position position="54"/>
    </location>
    <ligand>
        <name>L-leucine</name>
        <dbReference type="ChEBI" id="CHEBI:57427"/>
        <note>substrate</note>
    </ligand>
</feature>
<feature type="binding site" evidence="2">
    <location>
        <position position="135"/>
    </location>
    <ligand>
        <name>L-tryptophan</name>
        <dbReference type="ChEBI" id="CHEBI:57912"/>
        <note>substrate</note>
    </ligand>
</feature>
<feature type="binding site" evidence="2">
    <location>
        <position position="247"/>
    </location>
    <ligand>
        <name>L-leucine</name>
        <dbReference type="ChEBI" id="CHEBI:57427"/>
        <note>substrate</note>
    </ligand>
</feature>
<feature type="binding site" evidence="2">
    <location>
        <position position="396"/>
    </location>
    <ligand>
        <name>L-tryptophan</name>
        <dbReference type="ChEBI" id="CHEBI:57912"/>
        <note>substrate</note>
    </ligand>
</feature>
<feature type="site" description="Important for substrate specificity" evidence="2">
    <location>
        <position position="135"/>
    </location>
</feature>
<feature type="site" description="Important for substrate specificity" evidence="2">
    <location>
        <position position="247"/>
    </location>
</feature>
<feature type="modified residue" description="Phosphoserine" evidence="1">
    <location>
        <position position="20"/>
    </location>
</feature>
<feature type="modified residue" description="Phosphoserine" evidence="10">
    <location>
        <position position="23"/>
    </location>
</feature>
<feature type="modified residue" description="Phosphoserine" evidence="10">
    <location>
        <position position="29"/>
    </location>
</feature>
<feature type="modified residue" description="Phosphoserine" evidence="10">
    <location>
        <position position="30"/>
    </location>
</feature>
<feature type="modified residue" description="Phosphoserine" evidence="10">
    <location>
        <position position="529"/>
    </location>
</feature>
<feature type="disulfide bond" description="Interchain (with C-103 in SLC3A2)" evidence="2">
    <location>
        <position position="155"/>
    </location>
</feature>
<evidence type="ECO:0000250" key="1">
    <source>
        <dbReference type="UniProtKB" id="Q9QXW9"/>
    </source>
</evidence>
<evidence type="ECO:0000250" key="2">
    <source>
        <dbReference type="UniProtKB" id="Q9UHI5"/>
    </source>
</evidence>
<evidence type="ECO:0000256" key="3">
    <source>
        <dbReference type="SAM" id="MobiDB-lite"/>
    </source>
</evidence>
<evidence type="ECO:0000269" key="4">
    <source>
    </source>
</evidence>
<evidence type="ECO:0000269" key="5">
    <source>
    </source>
</evidence>
<evidence type="ECO:0000269" key="6">
    <source>
    </source>
</evidence>
<evidence type="ECO:0000269" key="7">
    <source>
    </source>
</evidence>
<evidence type="ECO:0000305" key="8"/>
<evidence type="ECO:0000305" key="9">
    <source>
    </source>
</evidence>
<evidence type="ECO:0007744" key="10">
    <source>
    </source>
</evidence>
<organism>
    <name type="scientific">Rattus norvegicus</name>
    <name type="common">Rat</name>
    <dbReference type="NCBI Taxonomy" id="10116"/>
    <lineage>
        <taxon>Eukaryota</taxon>
        <taxon>Metazoa</taxon>
        <taxon>Chordata</taxon>
        <taxon>Craniata</taxon>
        <taxon>Vertebrata</taxon>
        <taxon>Euteleostomi</taxon>
        <taxon>Mammalia</taxon>
        <taxon>Eutheria</taxon>
        <taxon>Euarchontoglires</taxon>
        <taxon>Glires</taxon>
        <taxon>Rodentia</taxon>
        <taxon>Myomorpha</taxon>
        <taxon>Muroidea</taxon>
        <taxon>Muridae</taxon>
        <taxon>Murinae</taxon>
        <taxon>Rattus</taxon>
    </lineage>
</organism>
<proteinExistence type="evidence at protein level"/>
<accession>Q9WVR6</accession>
<name>LAT2_RAT</name>
<comment type="function">
    <text evidence="1 2 4 5">Associates with SLC3A2 to form a functional heterodimeric complex that translocates small and large neutral amino acids with broad specificity and a stoichiometry of 1:1 (PubMed:10391916). Functions as amino acid antiporter mediating the influx of extracellular essential amino acids mainly in exchange with the efflux of highly concentrated intracellular amino acids. Has relatively symmetrical selectivities but strongly asymmetrical substrate affinities at both the intracellular and extracellular sides of the transporter. This asymmetry allows SLC7A8 to regulate intracellular amino acid pools (mM concentrations) by exchange with external amino acids (uM concentration range), equilibrating the relative concentrations of different amino acids across the plasma membrane instead of mediating their net uptake. May play an essential role in the reabsorption of neutral amino acids from the epithelial cells to the bloodstream in the kidney. Involved in the uptake of methylmercury (MeHg) when administered as the L-cysteine or D,L-homocysteine complexes, and hence plays a role in metal ion homeostasis and toxicity. Involved in the cellular activity of small molecular weight nitrosothiols, via the stereoselective transport of L-nitrosocysteine (L-CNSO) across the transmembrane (By similarity). Imports the thyroid hormone diiodothyronine (T2) and to a smaller extent triiodothyronine (T3) but not rT 3 or thyroxine (T4) (By similarity). Mediates the uptake of L-DOPA (PubMed:15200428). May participate in auditory function (By similarity).</text>
</comment>
<comment type="catalytic activity">
    <reaction evidence="9">
        <text>L-dopa(out) + L-phenylalanine(in) = L-dopa(in) + L-phenylalanine(out)</text>
        <dbReference type="Rhea" id="RHEA:71439"/>
        <dbReference type="ChEBI" id="CHEBI:57504"/>
        <dbReference type="ChEBI" id="CHEBI:58095"/>
    </reaction>
</comment>
<comment type="catalytic activity">
    <reaction evidence="1">
        <text>3,3'-diiodo-L-thyronine(out) = 3,3'-diiodo-L-thyronine(in)</text>
        <dbReference type="Rhea" id="RHEA:71823"/>
        <dbReference type="ChEBI" id="CHEBI:176514"/>
    </reaction>
    <physiologicalReaction direction="left-to-right" evidence="1">
        <dbReference type="Rhea" id="RHEA:71824"/>
    </physiologicalReaction>
</comment>
<comment type="catalytic activity">
    <reaction evidence="2">
        <text>L-histidine(in) + L-phenylalanine(out) = L-histidine(out) + L-phenylalanine(in)</text>
        <dbReference type="Rhea" id="RHEA:71003"/>
        <dbReference type="ChEBI" id="CHEBI:57595"/>
        <dbReference type="ChEBI" id="CHEBI:58095"/>
    </reaction>
</comment>
<comment type="catalytic activity">
    <reaction evidence="2">
        <text>L-tryptophan(in) + L-phenylalanine(out) = L-tryptophan(out) + L-phenylalanine(in)</text>
        <dbReference type="Rhea" id="RHEA:71007"/>
        <dbReference type="ChEBI" id="CHEBI:57912"/>
        <dbReference type="ChEBI" id="CHEBI:58095"/>
    </reaction>
</comment>
<comment type="catalytic activity">
    <reaction evidence="2">
        <text>L-isoleucine(in) + L-phenylalanine(out) = L-isoleucine(out) + L-phenylalanine(in)</text>
        <dbReference type="Rhea" id="RHEA:71011"/>
        <dbReference type="ChEBI" id="CHEBI:58045"/>
        <dbReference type="ChEBI" id="CHEBI:58095"/>
    </reaction>
</comment>
<comment type="catalytic activity">
    <reaction evidence="2">
        <text>L-valine(in) + L-phenylalanine(out) = L-valine(out) + L-phenylalanine(in)</text>
        <dbReference type="Rhea" id="RHEA:71019"/>
        <dbReference type="ChEBI" id="CHEBI:57762"/>
        <dbReference type="ChEBI" id="CHEBI:58095"/>
    </reaction>
</comment>
<comment type="catalytic activity">
    <reaction evidence="2">
        <text>L-leucine(in) + L-phenylalanine(out) = L-leucine(out) + L-phenylalanine(in)</text>
        <dbReference type="Rhea" id="RHEA:71023"/>
        <dbReference type="ChEBI" id="CHEBI:57427"/>
        <dbReference type="ChEBI" id="CHEBI:58095"/>
    </reaction>
</comment>
<comment type="catalytic activity">
    <reaction evidence="2">
        <text>L-glutamine(in) + L-phenylalanine(out) = L-glutamine(out) + L-phenylalanine(in)</text>
        <dbReference type="Rhea" id="RHEA:71027"/>
        <dbReference type="ChEBI" id="CHEBI:58095"/>
        <dbReference type="ChEBI" id="CHEBI:58359"/>
    </reaction>
</comment>
<comment type="catalytic activity">
    <reaction evidence="2">
        <text>L-cysteine(in) + L-phenylalanine(out) = L-cysteine(out) + L-phenylalanine(in)</text>
        <dbReference type="Rhea" id="RHEA:71031"/>
        <dbReference type="ChEBI" id="CHEBI:35235"/>
        <dbReference type="ChEBI" id="CHEBI:58095"/>
    </reaction>
</comment>
<comment type="catalytic activity">
    <reaction evidence="2">
        <text>L-phenylalanine(out) + L-methionine(in) = L-phenylalanine(in) + L-methionine(out)</text>
        <dbReference type="Rhea" id="RHEA:71039"/>
        <dbReference type="ChEBI" id="CHEBI:57844"/>
        <dbReference type="ChEBI" id="CHEBI:58095"/>
    </reaction>
</comment>
<comment type="catalytic activity">
    <reaction evidence="2">
        <text>L-leucine(out) + L-methionine(in) = L-leucine(in) + L-methionine(out)</text>
        <dbReference type="Rhea" id="RHEA:71051"/>
        <dbReference type="ChEBI" id="CHEBI:57427"/>
        <dbReference type="ChEBI" id="CHEBI:57844"/>
    </reaction>
</comment>
<comment type="catalytic activity">
    <reaction evidence="2">
        <text>L-cysteine(out) + L-methionine(in) = L-cysteine(in) + L-methionine(out)</text>
        <dbReference type="Rhea" id="RHEA:71055"/>
        <dbReference type="ChEBI" id="CHEBI:35235"/>
        <dbReference type="ChEBI" id="CHEBI:57844"/>
    </reaction>
</comment>
<comment type="catalytic activity">
    <reaction evidence="2">
        <text>S-methylmercury-L-cysteine(out) + L-methionine(in) = S-methylmercury-L-cysteine(in) + L-methionine(out)</text>
        <dbReference type="Rhea" id="RHEA:71103"/>
        <dbReference type="ChEBI" id="CHEBI:57844"/>
        <dbReference type="ChEBI" id="CHEBI:190186"/>
    </reaction>
</comment>
<comment type="catalytic activity">
    <reaction evidence="2">
        <text>S-methylmercury-L-cysteine(in) + L-leucine(out) = S-methylmercury-L-cysteine(out) + L-leucine(in)</text>
        <dbReference type="Rhea" id="RHEA:71107"/>
        <dbReference type="ChEBI" id="CHEBI:57427"/>
        <dbReference type="ChEBI" id="CHEBI:190186"/>
    </reaction>
</comment>
<comment type="catalytic activity">
    <reaction evidence="2">
        <text>S-methylmercury-L-cysteine(in) + L-phenylalanine(out) = S-methylmercury-L-cysteine(out) + L-phenylalanine(in)</text>
        <dbReference type="Rhea" id="RHEA:71111"/>
        <dbReference type="ChEBI" id="CHEBI:58095"/>
        <dbReference type="ChEBI" id="CHEBI:190186"/>
    </reaction>
</comment>
<comment type="catalytic activity">
    <reaction evidence="2">
        <text>L-phenylalanine(out) + L-serine(in) = L-phenylalanine(in) + L-serine(out)</text>
        <dbReference type="Rhea" id="RHEA:71035"/>
        <dbReference type="ChEBI" id="CHEBI:33384"/>
        <dbReference type="ChEBI" id="CHEBI:58095"/>
    </reaction>
</comment>
<comment type="catalytic activity">
    <reaction evidence="2">
        <text>L-phenylalanine(out) + glycine(in) = L-phenylalanine(in) + glycine(out)</text>
        <dbReference type="Rhea" id="RHEA:71047"/>
        <dbReference type="ChEBI" id="CHEBI:57305"/>
        <dbReference type="ChEBI" id="CHEBI:58095"/>
    </reaction>
</comment>
<comment type="catalytic activity">
    <reaction evidence="2">
        <text>L-phenylalanine(out) + L-alanine(in) = L-phenylalanine(in) + L-alanine(out)</text>
        <dbReference type="Rhea" id="RHEA:71043"/>
        <dbReference type="ChEBI" id="CHEBI:57972"/>
        <dbReference type="ChEBI" id="CHEBI:58095"/>
    </reaction>
</comment>
<comment type="catalytic activity">
    <reaction evidence="1">
        <text>3,3',5-triiodo-L-thyronine(out) = 3,3',5-triiodo-L-thyronine(in)</text>
        <dbReference type="Rhea" id="RHEA:71811"/>
        <dbReference type="ChEBI" id="CHEBI:533015"/>
    </reaction>
    <physiologicalReaction direction="left-to-right" evidence="1">
        <dbReference type="Rhea" id="RHEA:71812"/>
    </physiologicalReaction>
</comment>
<comment type="activity regulation">
    <text evidence="4">Leucine transport activity is inhibited by 2-amino-bicyclo-(2,2,1)-heptane-2-carboxylate (BCH), glycine, L-isomers of the neutral amino acids and histidine.</text>
</comment>
<comment type="biophysicochemical properties">
    <kinetics>
        <KM evidence="4">119 uM for L-leucine</KM>
        <KM evidence="4">265 uM for glycine</KM>
        <KM evidence="4">187 uM for L-alanine</KM>
        <KM evidence="4">116 uM for L-serine</KM>
        <KM evidence="4">68.6 uM for L-threonine</KM>
        <KM evidence="4">109 uM for L-cysteine</KM>
        <KM evidence="4">80.7 uM for L-asparagine</KM>
        <KM evidence="4">151 uM for L-glutamine</KM>
        <KM evidence="4">96.7 uM for L-isoleucine</KM>
        <KM evidence="4">124 uM for L-valine</KM>
        <KM evidence="4">204 uM for L-methionine</KM>
        <KM evidence="4">45 uM for L-phenylalanine</KM>
        <KM evidence="4">35.9 uM for L-tyrosine</KM>
        <KM evidence="4">57.6 uM for L-tryptophan</KM>
        <KM evidence="5">29.3 uM for L-DOPA</KM>
        <KM evidence="4">181 uM for L-histidine</KM>
    </kinetics>
    <phDependence>
        <text evidence="4">Optimum pH is 6.25.</text>
    </phDependence>
</comment>
<comment type="subunit">
    <text evidence="2 4">Disulfide-linked heterodimer composed of the catalytic light chain subunit SLC7A8 and the heavy chain subunit SLC3A2 (PubMed:10391916). SLC3A2 acts as a chaperone for correct plasma membrane trafficking and stabilization of SLC7A8 and modulates the substrate affinity and specificity of SLC7A8. ICAM-1 associates with the heterodimer SLC3A2/SLC7A8; facilitates leucine uptake (By similarity).</text>
</comment>
<comment type="subcellular location">
    <subcellularLocation>
        <location evidence="2">Cell membrane</location>
        <topology evidence="2">Multi-pass membrane protein</topology>
    </subcellularLocation>
    <subcellularLocation>
        <location evidence="7">Basolateral cell membrane</location>
        <topology evidence="2">Multi-pass membrane protein</topology>
    </subcellularLocation>
    <text evidence="2">Localized to the plasma membrane when coexpressed with SLC3A2/4F2hc. Colocalized with SLC3A2/4F2hc at the basolateral membrane of kidney cortex proximal tubules and small intestine epithelia of the villi.</text>
</comment>
<comment type="tissue specificity">
    <text evidence="4 6 7">Expression is seen in jejunum mucosa and the epithelial cells of the jejunum, ileum and colon, as well as in kidney, placenta, brain, testis and skeletal muscle. Expressed in retina, inner blood-retinal barrier of retina, retinal vascular endothelial cells. Also expressed in the intestinal epithelial cell line IEC-6 and in the retinal capillary endothelial cell line TR-iBRB2.</text>
</comment>
<comment type="similarity">
    <text evidence="8">Belongs to the amino acid-polyamine-organocation (APC) superfamily. L-type amino acid transporter (LAT) (TC 2.A.3.8) family.</text>
</comment>
<sequence>MEKGTRQRNNTAKNHPDRGSDTSPEAEASSGGGGVALKKEIGLVSACGIIVGNIIGSGIFVSPKGVLENAGSVGLALIVWIVTGVITAVGALCYAELGVTIPKSGGDYSYVKDIFGGLAGFLRLWIAVLVIYPTNQAVIALTFSNYVLQPLFPTCFPPESGLRLLAAICLLLLTWVNCSSVRWATRVQDIFTAGKLLALALIIIMGVVQICKGEFFWLEPKNAFENFQEPDIGLVALAFLQGSFAYGGWNFLNYVTEELVDPYKNLPRAIFISIPLVTFVYVFANIAYVTAMSPQELLASNAVAVTFGEKLLGVMAWIMPISVALSTFGGVNGSLFTSSRLFFAGAREGHLPSVLAMIHVKRCTPIPALLFTCLSTLLMLVTSDMYTLINYVGFINYLFYGVTVAGQIVLRWKKPDIPRPIKISLLFPIIYLLFWAFLLIFSLWSEPVVCGIGLAIMLTGVPVYFLGVYWQHKPKCFNDFIESLTLVSQKMCVVVYPQEGDSGTEETIDDVEEQHKPIFQPTPVKDPDSEEQP</sequence>
<dbReference type="EMBL" id="AB024400">
    <property type="protein sequence ID" value="BAA82517.1"/>
    <property type="molecule type" value="mRNA"/>
</dbReference>
<dbReference type="RefSeq" id="NP_445894.1">
    <property type="nucleotide sequence ID" value="NM_053442.1"/>
</dbReference>
<dbReference type="SMR" id="Q9WVR6"/>
<dbReference type="FunCoup" id="Q9WVR6">
    <property type="interactions" value="339"/>
</dbReference>
<dbReference type="STRING" id="10116.ENSRNOP00000019618"/>
<dbReference type="TCDB" id="2.A.3.8.6">
    <property type="family name" value="the amino acid-polyamine-organocation (apc) family"/>
</dbReference>
<dbReference type="iPTMnet" id="Q9WVR6"/>
<dbReference type="PhosphoSitePlus" id="Q9WVR6"/>
<dbReference type="PaxDb" id="10116-ENSRNOP00000019618"/>
<dbReference type="Ensembl" id="ENSRNOT00000019618.5">
    <property type="protein sequence ID" value="ENSRNOP00000019618.3"/>
    <property type="gene ID" value="ENSRNOG00000014311.6"/>
</dbReference>
<dbReference type="GeneID" id="84551"/>
<dbReference type="KEGG" id="rno:84551"/>
<dbReference type="UCSC" id="RGD:619904">
    <property type="organism name" value="rat"/>
</dbReference>
<dbReference type="AGR" id="RGD:619904"/>
<dbReference type="CTD" id="23428"/>
<dbReference type="RGD" id="619904">
    <property type="gene designation" value="Slc7a8"/>
</dbReference>
<dbReference type="eggNOG" id="KOG1287">
    <property type="taxonomic scope" value="Eukaryota"/>
</dbReference>
<dbReference type="GeneTree" id="ENSGT00940000158278"/>
<dbReference type="InParanoid" id="Q9WVR6"/>
<dbReference type="OMA" id="WVSNAAL"/>
<dbReference type="OrthoDB" id="3257095at2759"/>
<dbReference type="PhylomeDB" id="Q9WVR6"/>
<dbReference type="TreeFam" id="TF313355"/>
<dbReference type="Reactome" id="R-RNO-210991">
    <property type="pathway name" value="Basigin interactions"/>
</dbReference>
<dbReference type="Reactome" id="R-RNO-352230">
    <property type="pathway name" value="Amino acid transport across the plasma membrane"/>
</dbReference>
<dbReference type="SABIO-RK" id="Q9WVR6"/>
<dbReference type="PRO" id="PR:Q9WVR6"/>
<dbReference type="Proteomes" id="UP000002494">
    <property type="component" value="Chromosome 15"/>
</dbReference>
<dbReference type="Bgee" id="ENSRNOG00000014311">
    <property type="expression patterns" value="Expressed in ovary and 19 other cell types or tissues"/>
</dbReference>
<dbReference type="GO" id="GO:0016324">
    <property type="term" value="C:apical plasma membrane"/>
    <property type="evidence" value="ECO:0000266"/>
    <property type="project" value="RGD"/>
</dbReference>
<dbReference type="GO" id="GO:0009925">
    <property type="term" value="C:basal plasma membrane"/>
    <property type="evidence" value="ECO:0000266"/>
    <property type="project" value="RGD"/>
</dbReference>
<dbReference type="GO" id="GO:0016323">
    <property type="term" value="C:basolateral plasma membrane"/>
    <property type="evidence" value="ECO:0000266"/>
    <property type="project" value="RGD"/>
</dbReference>
<dbReference type="GO" id="GO:0031528">
    <property type="term" value="C:microvillus membrane"/>
    <property type="evidence" value="ECO:0000266"/>
    <property type="project" value="RGD"/>
</dbReference>
<dbReference type="GO" id="GO:0005886">
    <property type="term" value="C:plasma membrane"/>
    <property type="evidence" value="ECO:0000266"/>
    <property type="project" value="RGD"/>
</dbReference>
<dbReference type="GO" id="GO:0015171">
    <property type="term" value="F:amino acid transmembrane transporter activity"/>
    <property type="evidence" value="ECO:0000250"/>
    <property type="project" value="UniProtKB"/>
</dbReference>
<dbReference type="GO" id="GO:0015297">
    <property type="term" value="F:antiporter activity"/>
    <property type="evidence" value="ECO:0000266"/>
    <property type="project" value="RGD"/>
</dbReference>
<dbReference type="GO" id="GO:0015187">
    <property type="term" value="F:glycine transmembrane transporter activity"/>
    <property type="evidence" value="ECO:0000266"/>
    <property type="project" value="RGD"/>
</dbReference>
<dbReference type="GO" id="GO:0015180">
    <property type="term" value="F:L-alanine transmembrane transporter activity"/>
    <property type="evidence" value="ECO:0000266"/>
    <property type="project" value="RGD"/>
</dbReference>
<dbReference type="GO" id="GO:0015179">
    <property type="term" value="F:L-amino acid transmembrane transporter activity"/>
    <property type="evidence" value="ECO:0000266"/>
    <property type="project" value="RGD"/>
</dbReference>
<dbReference type="GO" id="GO:0015190">
    <property type="term" value="F:L-leucine transmembrane transporter activity"/>
    <property type="evidence" value="ECO:0000266"/>
    <property type="project" value="RGD"/>
</dbReference>
<dbReference type="GO" id="GO:0015175">
    <property type="term" value="F:neutral L-amino acid transmembrane transporter activity"/>
    <property type="evidence" value="ECO:0000266"/>
    <property type="project" value="RGD"/>
</dbReference>
<dbReference type="GO" id="GO:0015101">
    <property type="term" value="F:organic cation transmembrane transporter activity"/>
    <property type="evidence" value="ECO:0000266"/>
    <property type="project" value="RGD"/>
</dbReference>
<dbReference type="GO" id="GO:0042605">
    <property type="term" value="F:peptide antigen binding"/>
    <property type="evidence" value="ECO:0000250"/>
    <property type="project" value="UniProtKB"/>
</dbReference>
<dbReference type="GO" id="GO:0046982">
    <property type="term" value="F:protein heterodimerization activity"/>
    <property type="evidence" value="ECO:0000266"/>
    <property type="project" value="RGD"/>
</dbReference>
<dbReference type="GO" id="GO:0015349">
    <property type="term" value="F:thyroid hormone transmembrane transporter activity"/>
    <property type="evidence" value="ECO:0000250"/>
    <property type="project" value="UniProtKB"/>
</dbReference>
<dbReference type="GO" id="GO:0019534">
    <property type="term" value="F:toxin transmembrane transporter activity"/>
    <property type="evidence" value="ECO:0000266"/>
    <property type="project" value="RGD"/>
</dbReference>
<dbReference type="GO" id="GO:0089718">
    <property type="term" value="P:amino acid import across plasma membrane"/>
    <property type="evidence" value="ECO:0000266"/>
    <property type="project" value="RGD"/>
</dbReference>
<dbReference type="GO" id="GO:0003333">
    <property type="term" value="P:amino acid transmembrane transport"/>
    <property type="evidence" value="ECO:0000318"/>
    <property type="project" value="GO_Central"/>
</dbReference>
<dbReference type="GO" id="GO:0006865">
    <property type="term" value="P:amino acid transport"/>
    <property type="evidence" value="ECO:0000266"/>
    <property type="project" value="RGD"/>
</dbReference>
<dbReference type="GO" id="GO:0015816">
    <property type="term" value="P:glycine transport"/>
    <property type="evidence" value="ECO:0000266"/>
    <property type="project" value="RGD"/>
</dbReference>
<dbReference type="GO" id="GO:1904273">
    <property type="term" value="P:L-alanine import across plasma membrane"/>
    <property type="evidence" value="ECO:0000266"/>
    <property type="project" value="RGD"/>
</dbReference>
<dbReference type="GO" id="GO:0015807">
    <property type="term" value="P:L-amino acid transport"/>
    <property type="evidence" value="ECO:0000266"/>
    <property type="project" value="RGD"/>
</dbReference>
<dbReference type="GO" id="GO:1903801">
    <property type="term" value="P:L-leucine import across plasma membrane"/>
    <property type="evidence" value="ECO:0000266"/>
    <property type="project" value="RGD"/>
</dbReference>
<dbReference type="GO" id="GO:0015820">
    <property type="term" value="P:L-leucine transport"/>
    <property type="evidence" value="ECO:0000266"/>
    <property type="project" value="RGD"/>
</dbReference>
<dbReference type="GO" id="GO:0015804">
    <property type="term" value="P:neutral amino acid transport"/>
    <property type="evidence" value="ECO:0000250"/>
    <property type="project" value="UniProtKB"/>
</dbReference>
<dbReference type="GO" id="GO:0035524">
    <property type="term" value="P:proline transmembrane transport"/>
    <property type="evidence" value="ECO:0000266"/>
    <property type="project" value="RGD"/>
</dbReference>
<dbReference type="GO" id="GO:0070327">
    <property type="term" value="P:thyroid hormone transport"/>
    <property type="evidence" value="ECO:0000250"/>
    <property type="project" value="UniProtKB"/>
</dbReference>
<dbReference type="GO" id="GO:0015827">
    <property type="term" value="P:tryptophan transport"/>
    <property type="evidence" value="ECO:0000266"/>
    <property type="project" value="RGD"/>
</dbReference>
<dbReference type="GO" id="GO:0015829">
    <property type="term" value="P:valine transport"/>
    <property type="evidence" value="ECO:0000266"/>
    <property type="project" value="RGD"/>
</dbReference>
<dbReference type="FunFam" id="1.20.1740.10:FF:000008">
    <property type="entry name" value="large neutral amino acids transporter small subunit 2"/>
    <property type="match status" value="1"/>
</dbReference>
<dbReference type="Gene3D" id="1.20.1740.10">
    <property type="entry name" value="Amino acid/polyamine transporter I"/>
    <property type="match status" value="1"/>
</dbReference>
<dbReference type="InterPro" id="IPR002293">
    <property type="entry name" value="AA/rel_permease1"/>
</dbReference>
<dbReference type="InterPro" id="IPR050598">
    <property type="entry name" value="AminoAcid_Transporter"/>
</dbReference>
<dbReference type="InterPro" id="IPR004760">
    <property type="entry name" value="L_AA_transporter"/>
</dbReference>
<dbReference type="NCBIfam" id="TIGR00911">
    <property type="entry name" value="2A0308"/>
    <property type="match status" value="1"/>
</dbReference>
<dbReference type="PANTHER" id="PTHR11785">
    <property type="entry name" value="AMINO ACID TRANSPORTER"/>
    <property type="match status" value="1"/>
</dbReference>
<dbReference type="PANTHER" id="PTHR11785:SF113">
    <property type="entry name" value="LARGE NEUTRAL AMINO ACIDS TRANSPORTER SMALL SUBUNIT 2"/>
    <property type="match status" value="1"/>
</dbReference>
<dbReference type="Pfam" id="PF13520">
    <property type="entry name" value="AA_permease_2"/>
    <property type="match status" value="1"/>
</dbReference>
<dbReference type="PIRSF" id="PIRSF006060">
    <property type="entry name" value="AA_transporter"/>
    <property type="match status" value="1"/>
</dbReference>
<protein>
    <recommendedName>
        <fullName>Large neutral amino acids transporter small subunit 2</fullName>
    </recommendedName>
    <alternativeName>
        <fullName>L-type amino acid transporter 2</fullName>
    </alternativeName>
    <alternativeName>
        <fullName>Solute carrier family 7 member 8</fullName>
    </alternativeName>
</protein>
<reference key="1">
    <citation type="journal article" date="1999" name="J. Biol. Chem.">
        <title>Identification and functional characterization of a Na+-independent neutral amino acid transporter with broad substrate selectivity.</title>
        <authorList>
            <person name="Segawa H."/>
            <person name="Fukasawa Y."/>
            <person name="Miyamoto K."/>
            <person name="Takeda E."/>
            <person name="Endou H."/>
            <person name="Kanai Y."/>
        </authorList>
    </citation>
    <scope>NUCLEOTIDE SEQUENCE [MRNA]</scope>
    <scope>FUNCTION</scope>
    <scope>BIOPHYSICOCHEMICAL PROPERTIES</scope>
    <scope>SUBUNIT</scope>
    <scope>TISSUE SPECIFICITY</scope>
    <scope>ACTIVITY REGULATION</scope>
    <source>
        <tissue>Small intestine</tissue>
    </source>
</reference>
<reference key="2">
    <citation type="journal article" date="2005" name="Amino Acids">
        <title>Expression of LAT1 and LAT2 amino acid transporters in human and rat intestinal epithelial cells.</title>
        <authorList>
            <person name="Fraga S."/>
            <person name="Pinho M.J."/>
            <person name="Soares-da-Silva P."/>
        </authorList>
    </citation>
    <scope>SUBCELLULAR LOCATION</scope>
    <scope>TISSUE SPECIFICITY</scope>
</reference>
<reference key="3">
    <citation type="journal article" date="2005" name="Invest. Ophthalmol. Vis. Sci.">
        <title>L-type amino acid transporter 1-mediated L-leucine transport at the inner blood-retinal barrier.</title>
        <authorList>
            <person name="Tomi M."/>
            <person name="Mori M."/>
            <person name="Tachikawa M."/>
            <person name="Katayama K."/>
            <person name="Terasaki T."/>
            <person name="Hosoya K."/>
        </authorList>
    </citation>
    <scope>TISSUE SPECIFICITY</scope>
</reference>
<reference key="4">
    <citation type="journal article" date="2012" name="Nat. Commun.">
        <title>Quantitative maps of protein phosphorylation sites across 14 different rat organs and tissues.</title>
        <authorList>
            <person name="Lundby A."/>
            <person name="Secher A."/>
            <person name="Lage K."/>
            <person name="Nordsborg N.B."/>
            <person name="Dmytriyev A."/>
            <person name="Lundby C."/>
            <person name="Olsen J.V."/>
        </authorList>
    </citation>
    <scope>PHOSPHORYLATION [LARGE SCALE ANALYSIS] AT SER-23; SER-29; SER-30 AND SER-529</scope>
    <scope>IDENTIFICATION BY MASS SPECTROMETRY [LARGE SCALE ANALYSIS]</scope>
</reference>
<reference key="5">
    <citation type="journal article" date="2004" name="Kidney Int.">
        <title>Over-expression of renal LAT1 and LAT2 and enhanced L-DOPA uptake in SHR immortalized renal proximal tubular cells.</title>
        <authorList>
            <person name="Pinho M.J."/>
            <person name="Serrao M.P."/>
            <person name="Gomes P."/>
            <person name="Hopfer U."/>
            <person name="Jose P.A."/>
            <person name="Soares-da-Silva P."/>
        </authorList>
    </citation>
    <scope>FUNCTION</scope>
    <scope>TRANSPORTER ACTIVITY</scope>
    <scope>BIOPHYSICOCHEMICAL PROPERTIES</scope>
</reference>
<keyword id="KW-0029">Amino-acid transport</keyword>
<keyword id="KW-0050">Antiport</keyword>
<keyword id="KW-1003">Cell membrane</keyword>
<keyword id="KW-1015">Disulfide bond</keyword>
<keyword id="KW-0472">Membrane</keyword>
<keyword id="KW-0597">Phosphoprotein</keyword>
<keyword id="KW-1185">Reference proteome</keyword>
<keyword id="KW-0812">Transmembrane</keyword>
<keyword id="KW-1133">Transmembrane helix</keyword>
<keyword id="KW-0813">Transport</keyword>
<gene>
    <name type="primary">Slc7a8</name>
    <name type="synonym">Lat2</name>
    <name type="synonym">Lat4</name>
</gene>